<protein>
    <recommendedName>
        <fullName evidence="1">Aspartate--tRNA ligase</fullName>
        <ecNumber evidence="1">6.1.1.12</ecNumber>
    </recommendedName>
    <alternativeName>
        <fullName evidence="1">Aspartyl-tRNA synthetase</fullName>
        <shortName evidence="1">AspRS</shortName>
    </alternativeName>
</protein>
<dbReference type="EC" id="6.1.1.12" evidence="1"/>
<dbReference type="EMBL" id="CP000123">
    <property type="protein sequence ID" value="ABC01492.1"/>
    <property type="molecule type" value="Genomic_DNA"/>
</dbReference>
<dbReference type="EMBL" id="Z33048">
    <property type="protein sequence ID" value="CAA83720.1"/>
    <property type="molecule type" value="Genomic_DNA"/>
</dbReference>
<dbReference type="PIR" id="S77851">
    <property type="entry name" value="S77851"/>
</dbReference>
<dbReference type="RefSeq" id="WP_011387209.1">
    <property type="nucleotide sequence ID" value="NC_007633.1"/>
</dbReference>
<dbReference type="SMR" id="Q48979"/>
<dbReference type="GeneID" id="23778721"/>
<dbReference type="KEGG" id="mcp:MCAP_0323"/>
<dbReference type="HOGENOM" id="CLU_014330_3_2_14"/>
<dbReference type="PhylomeDB" id="Q48979"/>
<dbReference type="Proteomes" id="UP000001928">
    <property type="component" value="Chromosome"/>
</dbReference>
<dbReference type="GO" id="GO:0005737">
    <property type="term" value="C:cytoplasm"/>
    <property type="evidence" value="ECO:0007669"/>
    <property type="project" value="UniProtKB-SubCell"/>
</dbReference>
<dbReference type="GO" id="GO:0004815">
    <property type="term" value="F:aspartate-tRNA ligase activity"/>
    <property type="evidence" value="ECO:0007669"/>
    <property type="project" value="UniProtKB-UniRule"/>
</dbReference>
<dbReference type="GO" id="GO:0005524">
    <property type="term" value="F:ATP binding"/>
    <property type="evidence" value="ECO:0007669"/>
    <property type="project" value="UniProtKB-UniRule"/>
</dbReference>
<dbReference type="GO" id="GO:0003676">
    <property type="term" value="F:nucleic acid binding"/>
    <property type="evidence" value="ECO:0007669"/>
    <property type="project" value="InterPro"/>
</dbReference>
<dbReference type="GO" id="GO:0006422">
    <property type="term" value="P:aspartyl-tRNA aminoacylation"/>
    <property type="evidence" value="ECO:0007669"/>
    <property type="project" value="UniProtKB-UniRule"/>
</dbReference>
<dbReference type="CDD" id="cd00777">
    <property type="entry name" value="AspRS_core"/>
    <property type="match status" value="1"/>
</dbReference>
<dbReference type="CDD" id="cd04317">
    <property type="entry name" value="EcAspRS_like_N"/>
    <property type="match status" value="1"/>
</dbReference>
<dbReference type="Gene3D" id="3.30.930.10">
    <property type="entry name" value="Bira Bifunctional Protein, Domain 2"/>
    <property type="match status" value="1"/>
</dbReference>
<dbReference type="Gene3D" id="3.30.1360.30">
    <property type="entry name" value="GAD-like domain"/>
    <property type="match status" value="1"/>
</dbReference>
<dbReference type="Gene3D" id="2.40.50.140">
    <property type="entry name" value="Nucleic acid-binding proteins"/>
    <property type="match status" value="1"/>
</dbReference>
<dbReference type="HAMAP" id="MF_00044">
    <property type="entry name" value="Asp_tRNA_synth_type1"/>
    <property type="match status" value="1"/>
</dbReference>
<dbReference type="InterPro" id="IPR004364">
    <property type="entry name" value="Aa-tRNA-synt_II"/>
</dbReference>
<dbReference type="InterPro" id="IPR006195">
    <property type="entry name" value="aa-tRNA-synth_II"/>
</dbReference>
<dbReference type="InterPro" id="IPR045864">
    <property type="entry name" value="aa-tRNA-synth_II/BPL/LPL"/>
</dbReference>
<dbReference type="InterPro" id="IPR004524">
    <property type="entry name" value="Asp-tRNA-ligase_1"/>
</dbReference>
<dbReference type="InterPro" id="IPR047089">
    <property type="entry name" value="Asp-tRNA-ligase_1_N"/>
</dbReference>
<dbReference type="InterPro" id="IPR002312">
    <property type="entry name" value="Asp/Asn-tRNA-synth_IIb"/>
</dbReference>
<dbReference type="InterPro" id="IPR047090">
    <property type="entry name" value="AspRS_core"/>
</dbReference>
<dbReference type="InterPro" id="IPR004115">
    <property type="entry name" value="GAD-like_sf"/>
</dbReference>
<dbReference type="InterPro" id="IPR029351">
    <property type="entry name" value="GAD_dom"/>
</dbReference>
<dbReference type="InterPro" id="IPR012340">
    <property type="entry name" value="NA-bd_OB-fold"/>
</dbReference>
<dbReference type="InterPro" id="IPR004365">
    <property type="entry name" value="NA-bd_OB_tRNA"/>
</dbReference>
<dbReference type="NCBIfam" id="TIGR00459">
    <property type="entry name" value="aspS_bact"/>
    <property type="match status" value="1"/>
</dbReference>
<dbReference type="NCBIfam" id="NF001750">
    <property type="entry name" value="PRK00476.1"/>
    <property type="match status" value="1"/>
</dbReference>
<dbReference type="PANTHER" id="PTHR22594:SF5">
    <property type="entry name" value="ASPARTATE--TRNA LIGASE, MITOCHONDRIAL"/>
    <property type="match status" value="1"/>
</dbReference>
<dbReference type="PANTHER" id="PTHR22594">
    <property type="entry name" value="ASPARTYL/LYSYL-TRNA SYNTHETASE"/>
    <property type="match status" value="1"/>
</dbReference>
<dbReference type="Pfam" id="PF02938">
    <property type="entry name" value="GAD"/>
    <property type="match status" value="1"/>
</dbReference>
<dbReference type="Pfam" id="PF00152">
    <property type="entry name" value="tRNA-synt_2"/>
    <property type="match status" value="1"/>
</dbReference>
<dbReference type="Pfam" id="PF01336">
    <property type="entry name" value="tRNA_anti-codon"/>
    <property type="match status" value="1"/>
</dbReference>
<dbReference type="PRINTS" id="PR01042">
    <property type="entry name" value="TRNASYNTHASP"/>
</dbReference>
<dbReference type="SUPFAM" id="SSF55681">
    <property type="entry name" value="Class II aaRS and biotin synthetases"/>
    <property type="match status" value="1"/>
</dbReference>
<dbReference type="SUPFAM" id="SSF55261">
    <property type="entry name" value="GAD domain-like"/>
    <property type="match status" value="1"/>
</dbReference>
<dbReference type="SUPFAM" id="SSF50249">
    <property type="entry name" value="Nucleic acid-binding proteins"/>
    <property type="match status" value="1"/>
</dbReference>
<dbReference type="PROSITE" id="PS50862">
    <property type="entry name" value="AA_TRNA_LIGASE_II"/>
    <property type="match status" value="1"/>
</dbReference>
<evidence type="ECO:0000255" key="1">
    <source>
        <dbReference type="HAMAP-Rule" id="MF_00044"/>
    </source>
</evidence>
<evidence type="ECO:0000305" key="2"/>
<feature type="chain" id="PRO_0000110901" description="Aspartate--tRNA ligase">
    <location>
        <begin position="1"/>
        <end position="575"/>
    </location>
</feature>
<feature type="region of interest" description="Aspartate" evidence="1">
    <location>
        <begin position="193"/>
        <end position="196"/>
    </location>
</feature>
<feature type="binding site" evidence="1">
    <location>
        <position position="169"/>
    </location>
    <ligand>
        <name>L-aspartate</name>
        <dbReference type="ChEBI" id="CHEBI:29991"/>
    </ligand>
</feature>
<feature type="binding site" evidence="1">
    <location>
        <begin position="215"/>
        <end position="217"/>
    </location>
    <ligand>
        <name>ATP</name>
        <dbReference type="ChEBI" id="CHEBI:30616"/>
    </ligand>
</feature>
<feature type="binding site" evidence="1">
    <location>
        <position position="215"/>
    </location>
    <ligand>
        <name>L-aspartate</name>
        <dbReference type="ChEBI" id="CHEBI:29991"/>
    </ligand>
</feature>
<feature type="binding site" evidence="1">
    <location>
        <position position="224"/>
    </location>
    <ligand>
        <name>ATP</name>
        <dbReference type="ChEBI" id="CHEBI:30616"/>
    </ligand>
</feature>
<feature type="binding site" evidence="1">
    <location>
        <position position="438"/>
    </location>
    <ligand>
        <name>L-aspartate</name>
        <dbReference type="ChEBI" id="CHEBI:29991"/>
    </ligand>
</feature>
<feature type="binding site" evidence="1">
    <location>
        <position position="472"/>
    </location>
    <ligand>
        <name>ATP</name>
        <dbReference type="ChEBI" id="CHEBI:30616"/>
    </ligand>
</feature>
<feature type="binding site" evidence="1">
    <location>
        <position position="479"/>
    </location>
    <ligand>
        <name>L-aspartate</name>
        <dbReference type="ChEBI" id="CHEBI:29991"/>
    </ligand>
</feature>
<feature type="binding site" evidence="1">
    <location>
        <begin position="524"/>
        <end position="527"/>
    </location>
    <ligand>
        <name>ATP</name>
        <dbReference type="ChEBI" id="CHEBI:30616"/>
    </ligand>
</feature>
<feature type="sequence conflict" description="In Ref. 2; CAA83720." evidence="2" ref="2">
    <original>WG</original>
    <variation>ED</variation>
    <location>
        <begin position="523"/>
        <end position="524"/>
    </location>
</feature>
<proteinExistence type="inferred from homology"/>
<reference key="1">
    <citation type="submission" date="2005-09" db="EMBL/GenBank/DDBJ databases">
        <authorList>
            <person name="Glass J.I."/>
            <person name="Lartigue C."/>
            <person name="Pfannkoch C."/>
            <person name="Baden-Tillson H."/>
            <person name="Smith H.O."/>
            <person name="Venter J.C."/>
            <person name="Roske K."/>
            <person name="Wise K.S."/>
            <person name="Calcutt M.J."/>
            <person name="Nelson W.C."/>
            <person name="Nierman W.C."/>
        </authorList>
    </citation>
    <scope>NUCLEOTIDE SEQUENCE [LARGE SCALE GENOMIC DNA]</scope>
    <source>
        <strain>California kid / ATCC 27343 / NCTC 10154</strain>
    </source>
</reference>
<reference key="2">
    <citation type="journal article" date="1995" name="Mol. Microbiol.">
        <title>Exploring the Mycoplasma capricolum genome: a minimal cell reveals its physiology.</title>
        <authorList>
            <person name="Bork P."/>
            <person name="Ouzounis C."/>
            <person name="Casari G."/>
            <person name="Schneider R."/>
            <person name="Sander C."/>
            <person name="Dolan M."/>
            <person name="Gilbert W."/>
            <person name="Gillevet P.M."/>
        </authorList>
    </citation>
    <scope>NUCLEOTIDE SEQUENCE [GENOMIC DNA] OF 42-524</scope>
</reference>
<name>SYD_MYCCT</name>
<accession>Q48979</accession>
<accession>Q2SSF5</accession>
<organism>
    <name type="scientific">Mycoplasma capricolum subsp. capricolum (strain California kid / ATCC 27343 / NCTC 10154)</name>
    <dbReference type="NCBI Taxonomy" id="340047"/>
    <lineage>
        <taxon>Bacteria</taxon>
        <taxon>Bacillati</taxon>
        <taxon>Mycoplasmatota</taxon>
        <taxon>Mollicutes</taxon>
        <taxon>Mycoplasmataceae</taxon>
        <taxon>Mycoplasma</taxon>
    </lineage>
</organism>
<gene>
    <name evidence="1" type="primary">aspS</name>
    <name type="ordered locus">MCAP_0323</name>
</gene>
<keyword id="KW-0030">Aminoacyl-tRNA synthetase</keyword>
<keyword id="KW-0067">ATP-binding</keyword>
<keyword id="KW-0963">Cytoplasm</keyword>
<keyword id="KW-0436">Ligase</keyword>
<keyword id="KW-0547">Nucleotide-binding</keyword>
<keyword id="KW-0648">Protein biosynthesis</keyword>
<comment type="function">
    <text evidence="1">Catalyzes the attachment of L-aspartate to tRNA(Asp) in a two-step reaction: L-aspartate is first activated by ATP to form Asp-AMP and then transferred to the acceptor end of tRNA(Asp).</text>
</comment>
<comment type="catalytic activity">
    <reaction evidence="1">
        <text>tRNA(Asp) + L-aspartate + ATP = L-aspartyl-tRNA(Asp) + AMP + diphosphate</text>
        <dbReference type="Rhea" id="RHEA:19649"/>
        <dbReference type="Rhea" id="RHEA-COMP:9660"/>
        <dbReference type="Rhea" id="RHEA-COMP:9678"/>
        <dbReference type="ChEBI" id="CHEBI:29991"/>
        <dbReference type="ChEBI" id="CHEBI:30616"/>
        <dbReference type="ChEBI" id="CHEBI:33019"/>
        <dbReference type="ChEBI" id="CHEBI:78442"/>
        <dbReference type="ChEBI" id="CHEBI:78516"/>
        <dbReference type="ChEBI" id="CHEBI:456215"/>
        <dbReference type="EC" id="6.1.1.12"/>
    </reaction>
</comment>
<comment type="subunit">
    <text evidence="1">Homodimer.</text>
</comment>
<comment type="subcellular location">
    <subcellularLocation>
        <location evidence="1">Cytoplasm</location>
    </subcellularLocation>
</comment>
<comment type="similarity">
    <text evidence="1">Belongs to the class-II aminoacyl-tRNA synthetase family. Type 1 subfamily.</text>
</comment>
<sequence length="575" mass="66695">MKRTHTCGELTLQNVDQKVILQGWVKKIRKLGAMVFIDLKDRYGITQLVIEQENINLINNLKNEYVIEISGIVVKRKSVNKELITGEIEVIVKDLLVINKSELTPFVLENDVNVNEDTRLTYRYLDLRRQVMQNNLIIRAKINHIIRNYLTDLNFLEVETPYFAKSTPEGARHFLVPSRLNKNKFYALPQSPQLFKQLLMISGIDRYYQIVRCFRDEDLRIDRQPEFTQLDLEMSFATSEDVMQISESLIKKILKEVKNFEIKEPLLRLSYKDAIDLYGSDKPDLRYELKIHTLNDIFKNSDIKMFLDSQNKYIRAVCIDQLLTKKQLEELNQQAKQFHFNSIAFIKVENNAWSGSLASQLTEVQKKQLIEEFNIQNKATIILNIGKYEEISQLMGAIRISLAKMFNLETKDDFKLLWVVDFPLFEFSEQENRYVAAHHPFTSPKEESLADFDTNKKDALACAYDLVMNGFEIGGGSQRITNSEIQQRMFDAVELNQKQVEANFGWFMNAYKYGAPYHAGIAWGLDRISMILTDSNSIRDVIAFPKNSLGIDMMSNAPDLVSDKQLDELNIKTVE</sequence>